<protein>
    <recommendedName>
        <fullName>Macro domain-containing protein</fullName>
    </recommendedName>
    <alternativeName>
        <fullName>ORF549</fullName>
    </alternativeName>
</protein>
<evidence type="ECO:0000255" key="1">
    <source>
        <dbReference type="PROSITE-ProRule" id="PRU00490"/>
    </source>
</evidence>
<evidence type="ECO:0000305" key="2"/>
<geneLocation type="plasmid">
    <name>pKLH205</name>
</geneLocation>
<accession>Q93SX7</accession>
<name>Y189_ACISE</name>
<feature type="chain" id="PRO_0000089186" description="Macro domain-containing protein">
    <location>
        <begin position="1"/>
        <end position="183"/>
    </location>
</feature>
<feature type="domain" description="Macro" evidence="1">
    <location>
        <begin position="1"/>
        <end position="174"/>
    </location>
</feature>
<reference key="1">
    <citation type="journal article" date="2001" name="Gene">
        <title>The shuffling function of resolvases.</title>
        <authorList>
            <person name="Kholodii G."/>
        </authorList>
    </citation>
    <scope>NUCLEOTIDE SEQUENCE [GENOMIC DNA]</scope>
</reference>
<organism>
    <name type="scientific">Acinetobacter sp. (strain ED45-25)</name>
    <dbReference type="NCBI Taxonomy" id="194927"/>
    <lineage>
        <taxon>Bacteria</taxon>
        <taxon>Pseudomonadati</taxon>
        <taxon>Pseudomonadota</taxon>
        <taxon>Gammaproteobacteria</taxon>
        <taxon>Moraxellales</taxon>
        <taxon>Moraxellaceae</taxon>
        <taxon>Acinetobacter</taxon>
    </lineage>
</organism>
<keyword id="KW-0614">Plasmid</keyword>
<dbReference type="EMBL" id="AJ459234">
    <property type="protein sequence ID" value="CAD31054.1"/>
    <property type="molecule type" value="Genomic_DNA"/>
</dbReference>
<dbReference type="SMR" id="Q93SX7"/>
<dbReference type="CDD" id="cd02908">
    <property type="entry name" value="Macro_OAADPr_deacetylase"/>
    <property type="match status" value="1"/>
</dbReference>
<dbReference type="Gene3D" id="3.40.220.10">
    <property type="entry name" value="Leucine Aminopeptidase, subunit E, domain 1"/>
    <property type="match status" value="1"/>
</dbReference>
<dbReference type="InterPro" id="IPR002589">
    <property type="entry name" value="Macro_dom"/>
</dbReference>
<dbReference type="InterPro" id="IPR043472">
    <property type="entry name" value="Macro_dom-like"/>
</dbReference>
<dbReference type="PANTHER" id="PTHR11106">
    <property type="entry name" value="GANGLIOSIDE INDUCED DIFFERENTIATION ASSOCIATED PROTEIN 2-RELATED"/>
    <property type="match status" value="1"/>
</dbReference>
<dbReference type="PANTHER" id="PTHR11106:SF27">
    <property type="entry name" value="MACRO DOMAIN-CONTAINING PROTEIN"/>
    <property type="match status" value="1"/>
</dbReference>
<dbReference type="Pfam" id="PF01661">
    <property type="entry name" value="Macro"/>
    <property type="match status" value="1"/>
</dbReference>
<dbReference type="SMART" id="SM00506">
    <property type="entry name" value="A1pp"/>
    <property type="match status" value="1"/>
</dbReference>
<dbReference type="SUPFAM" id="SSF52949">
    <property type="entry name" value="Macro domain-like"/>
    <property type="match status" value="1"/>
</dbReference>
<dbReference type="PROSITE" id="PS51154">
    <property type="entry name" value="MACRO"/>
    <property type="match status" value="1"/>
</dbReference>
<sequence>MKKVHLIQADITAFAVHAIVNSANKSLLGGGGLDYVIHKKAGPLMKEECVRLNQEKGGCPTGQAEVTTAGNLPAKYLIHAVGPRWLDGEHNEPQLLCDAYSNALFKANEIHALTVSFPCISTGVYGFPPQKAAEIAIGTILSMLPQYDHVAEVFFICREDENYLIYKNILSNIDDPNIQILIS</sequence>
<comment type="similarity">
    <text evidence="2">Belongs to the MacroD-type family.</text>
</comment>
<proteinExistence type="inferred from homology"/>